<feature type="chain" id="PRO_0000330894" description="Protein arginine N-methyltransferase 2">
    <location>
        <begin position="1"/>
        <end position="512"/>
    </location>
</feature>
<feature type="domain" description="SAM-dependent MTase PRMT-type" evidence="3">
    <location>
        <begin position="120"/>
        <end position="508"/>
    </location>
</feature>
<feature type="region of interest" description="Disordered" evidence="4">
    <location>
        <begin position="67"/>
        <end position="103"/>
    </location>
</feature>
<feature type="region of interest" description="Disordered" evidence="4">
    <location>
        <begin position="375"/>
        <end position="395"/>
    </location>
</feature>
<feature type="compositionally biased region" description="Low complexity" evidence="4">
    <location>
        <begin position="88"/>
        <end position="99"/>
    </location>
</feature>
<feature type="active site" evidence="1">
    <location>
        <position position="231"/>
    </location>
</feature>
<feature type="active site" evidence="1">
    <location>
        <position position="240"/>
    </location>
</feature>
<feature type="binding site" evidence="1">
    <location>
        <position position="133"/>
    </location>
    <ligand>
        <name>S-adenosyl-L-methionine</name>
        <dbReference type="ChEBI" id="CHEBI:59789"/>
    </ligand>
</feature>
<feature type="binding site" evidence="1">
    <location>
        <position position="142"/>
    </location>
    <ligand>
        <name>S-adenosyl-L-methionine</name>
        <dbReference type="ChEBI" id="CHEBI:59789"/>
    </ligand>
</feature>
<feature type="binding site" evidence="1">
    <location>
        <position position="166"/>
    </location>
    <ligand>
        <name>S-adenosyl-L-methionine</name>
        <dbReference type="ChEBI" id="CHEBI:59789"/>
    </ligand>
</feature>
<feature type="binding site" evidence="1">
    <location>
        <position position="217"/>
    </location>
    <ligand>
        <name>S-adenosyl-L-methionine</name>
        <dbReference type="ChEBI" id="CHEBI:59789"/>
    </ligand>
</feature>
<accession>Q54HI0</accession>
<keyword id="KW-0963">Cytoplasm</keyword>
<keyword id="KW-0489">Methyltransferase</keyword>
<keyword id="KW-0539">Nucleus</keyword>
<keyword id="KW-1185">Reference proteome</keyword>
<keyword id="KW-0949">S-adenosyl-L-methionine</keyword>
<keyword id="KW-0808">Transferase</keyword>
<sequence length="512" mass="58871">MTDDYSKLKSEIMDLVSEEFLKTKDDIISVMIENNKLKRAELVVGNDSLPPPPPTPSIVKIEHTTTTSNIDDLPLPPPIQEVEEEEPTQQNIEQQQQTQDESDDYYKTVHPLGVQDTYEDEEYFSSYSKISLHHEMVFDKRRTAAYYHAISKSKNIFKDKVVLDVGCGTGILSCFVAKAGAKKVYAVDASDMAHRAELIVQQNGLADIVTVFKGKLEHIAFPEYVDVIVSEWQGAFLIFESMIESVIYARDNLMRPGGIILPSKASIYLSPINVDSFYNQYINQWSNVFNLDMSPLIPFAQEELLEEKTIRNYYVDNQDSVLDKPIILRTIDLSTITIEDLSKTVKTFEFQVPNGSKYHGFGSWFSVWFENLDDDDDDNDNNNNNNDNSNDDENKQQFAYYTIDRDGELVKSTYQQYSIDSKGLTPLFFKQSSNVLELSTAPGTGDQHWKQVLFLNSKEKILQSSDKQLDTTSIKGTIRILQNKDYRRHWWIEMYVSLKTNPFDYSYQKYLI</sequence>
<evidence type="ECO:0000250" key="1"/>
<evidence type="ECO:0000250" key="2">
    <source>
        <dbReference type="UniProtKB" id="P55345"/>
    </source>
</evidence>
<evidence type="ECO:0000255" key="3">
    <source>
        <dbReference type="PROSITE-ProRule" id="PRU01015"/>
    </source>
</evidence>
<evidence type="ECO:0000256" key="4">
    <source>
        <dbReference type="SAM" id="MobiDB-lite"/>
    </source>
</evidence>
<reference key="1">
    <citation type="journal article" date="2005" name="Nature">
        <title>The genome of the social amoeba Dictyostelium discoideum.</title>
        <authorList>
            <person name="Eichinger L."/>
            <person name="Pachebat J.A."/>
            <person name="Gloeckner G."/>
            <person name="Rajandream M.A."/>
            <person name="Sucgang R."/>
            <person name="Berriman M."/>
            <person name="Song J."/>
            <person name="Olsen R."/>
            <person name="Szafranski K."/>
            <person name="Xu Q."/>
            <person name="Tunggal B."/>
            <person name="Kummerfeld S."/>
            <person name="Madera M."/>
            <person name="Konfortov B.A."/>
            <person name="Rivero F."/>
            <person name="Bankier A.T."/>
            <person name="Lehmann R."/>
            <person name="Hamlin N."/>
            <person name="Davies R."/>
            <person name="Gaudet P."/>
            <person name="Fey P."/>
            <person name="Pilcher K."/>
            <person name="Chen G."/>
            <person name="Saunders D."/>
            <person name="Sodergren E.J."/>
            <person name="Davis P."/>
            <person name="Kerhornou A."/>
            <person name="Nie X."/>
            <person name="Hall N."/>
            <person name="Anjard C."/>
            <person name="Hemphill L."/>
            <person name="Bason N."/>
            <person name="Farbrother P."/>
            <person name="Desany B."/>
            <person name="Just E."/>
            <person name="Morio T."/>
            <person name="Rost R."/>
            <person name="Churcher C.M."/>
            <person name="Cooper J."/>
            <person name="Haydock S."/>
            <person name="van Driessche N."/>
            <person name="Cronin A."/>
            <person name="Goodhead I."/>
            <person name="Muzny D.M."/>
            <person name="Mourier T."/>
            <person name="Pain A."/>
            <person name="Lu M."/>
            <person name="Harper D."/>
            <person name="Lindsay R."/>
            <person name="Hauser H."/>
            <person name="James K.D."/>
            <person name="Quiles M."/>
            <person name="Madan Babu M."/>
            <person name="Saito T."/>
            <person name="Buchrieser C."/>
            <person name="Wardroper A."/>
            <person name="Felder M."/>
            <person name="Thangavelu M."/>
            <person name="Johnson D."/>
            <person name="Knights A."/>
            <person name="Loulseged H."/>
            <person name="Mungall K.L."/>
            <person name="Oliver K."/>
            <person name="Price C."/>
            <person name="Quail M.A."/>
            <person name="Urushihara H."/>
            <person name="Hernandez J."/>
            <person name="Rabbinowitsch E."/>
            <person name="Steffen D."/>
            <person name="Sanders M."/>
            <person name="Ma J."/>
            <person name="Kohara Y."/>
            <person name="Sharp S."/>
            <person name="Simmonds M.N."/>
            <person name="Spiegler S."/>
            <person name="Tivey A."/>
            <person name="Sugano S."/>
            <person name="White B."/>
            <person name="Walker D."/>
            <person name="Woodward J.R."/>
            <person name="Winckler T."/>
            <person name="Tanaka Y."/>
            <person name="Shaulsky G."/>
            <person name="Schleicher M."/>
            <person name="Weinstock G.M."/>
            <person name="Rosenthal A."/>
            <person name="Cox E.C."/>
            <person name="Chisholm R.L."/>
            <person name="Gibbs R.A."/>
            <person name="Loomis W.F."/>
            <person name="Platzer M."/>
            <person name="Kay R.R."/>
            <person name="Williams J.G."/>
            <person name="Dear P.H."/>
            <person name="Noegel A.A."/>
            <person name="Barrell B.G."/>
            <person name="Kuspa A."/>
        </authorList>
    </citation>
    <scope>NUCLEOTIDE SEQUENCE [LARGE SCALE GENOMIC DNA]</scope>
    <source>
        <strain>AX4</strain>
    </source>
</reference>
<name>ANM2_DICDI</name>
<proteinExistence type="inferred from homology"/>
<gene>
    <name type="primary">prmt2</name>
    <name type="ORF">DDB_G0289445</name>
</gene>
<protein>
    <recommendedName>
        <fullName>Protein arginine N-methyltransferase 2</fullName>
        <ecNumber evidence="2">2.1.1.319</ecNumber>
    </recommendedName>
    <alternativeName>
        <fullName>Histone-arginine N-methyltransferase PRMT2</fullName>
    </alternativeName>
</protein>
<organism>
    <name type="scientific">Dictyostelium discoideum</name>
    <name type="common">Social amoeba</name>
    <dbReference type="NCBI Taxonomy" id="44689"/>
    <lineage>
        <taxon>Eukaryota</taxon>
        <taxon>Amoebozoa</taxon>
        <taxon>Evosea</taxon>
        <taxon>Eumycetozoa</taxon>
        <taxon>Dictyostelia</taxon>
        <taxon>Dictyosteliales</taxon>
        <taxon>Dictyosteliaceae</taxon>
        <taxon>Dictyostelium</taxon>
    </lineage>
</organism>
<comment type="function">
    <text evidence="1">Arginine methyltransferase that methylates the guanidino nitrogens of arginyl residues in some proteins such as histones.</text>
</comment>
<comment type="catalytic activity">
    <reaction evidence="2">
        <text>L-arginyl-[protein] + 2 S-adenosyl-L-methionine = N(omega),N(omega)-dimethyl-L-arginyl-[protein] + 2 S-adenosyl-L-homocysteine + 2 H(+)</text>
        <dbReference type="Rhea" id="RHEA:48096"/>
        <dbReference type="Rhea" id="RHEA-COMP:10532"/>
        <dbReference type="Rhea" id="RHEA-COMP:11991"/>
        <dbReference type="ChEBI" id="CHEBI:15378"/>
        <dbReference type="ChEBI" id="CHEBI:29965"/>
        <dbReference type="ChEBI" id="CHEBI:57856"/>
        <dbReference type="ChEBI" id="CHEBI:59789"/>
        <dbReference type="ChEBI" id="CHEBI:61897"/>
        <dbReference type="EC" id="2.1.1.319"/>
    </reaction>
</comment>
<comment type="subcellular location">
    <subcellularLocation>
        <location evidence="1">Cytoplasm</location>
    </subcellularLocation>
    <subcellularLocation>
        <location evidence="1">Nucleus</location>
    </subcellularLocation>
</comment>
<comment type="similarity">
    <text evidence="3">Belongs to the class I-like SAM-binding methyltransferase superfamily. Protein arginine N-methyltransferase family.</text>
</comment>
<dbReference type="EC" id="2.1.1.319" evidence="2"/>
<dbReference type="EMBL" id="AAFI02000141">
    <property type="protein sequence ID" value="EAL62721.1"/>
    <property type="molecule type" value="Genomic_DNA"/>
</dbReference>
<dbReference type="RefSeq" id="XP_636224.1">
    <property type="nucleotide sequence ID" value="XM_631132.1"/>
</dbReference>
<dbReference type="SMR" id="Q54HI0"/>
<dbReference type="STRING" id="44689.Q54HI0"/>
<dbReference type="GlyGen" id="Q54HI0">
    <property type="glycosylation" value="1 site"/>
</dbReference>
<dbReference type="PaxDb" id="44689-DDB0235402"/>
<dbReference type="EnsemblProtists" id="EAL62721">
    <property type="protein sequence ID" value="EAL62721"/>
    <property type="gene ID" value="DDB_G0289445"/>
</dbReference>
<dbReference type="GeneID" id="8627143"/>
<dbReference type="KEGG" id="ddi:DDB_G0289445"/>
<dbReference type="dictyBase" id="DDB_G0289445">
    <property type="gene designation" value="prmt2"/>
</dbReference>
<dbReference type="VEuPathDB" id="AmoebaDB:DDB_G0289445"/>
<dbReference type="eggNOG" id="KOG1499">
    <property type="taxonomic scope" value="Eukaryota"/>
</dbReference>
<dbReference type="HOGENOM" id="CLU_017375_1_2_1"/>
<dbReference type="InParanoid" id="Q54HI0"/>
<dbReference type="OMA" id="AAYYHAI"/>
<dbReference type="PhylomeDB" id="Q54HI0"/>
<dbReference type="Reactome" id="R-DDI-3214858">
    <property type="pathway name" value="RMTs methylate histone arginines"/>
</dbReference>
<dbReference type="Reactome" id="R-DDI-8876725">
    <property type="pathway name" value="Protein methylation"/>
</dbReference>
<dbReference type="Reactome" id="R-DDI-9018519">
    <property type="pathway name" value="Estrogen-dependent gene expression"/>
</dbReference>
<dbReference type="PRO" id="PR:Q54HI0"/>
<dbReference type="Proteomes" id="UP000002195">
    <property type="component" value="Chromosome 5"/>
</dbReference>
<dbReference type="GO" id="GO:0005737">
    <property type="term" value="C:cytoplasm"/>
    <property type="evidence" value="ECO:0000250"/>
    <property type="project" value="UniProtKB"/>
</dbReference>
<dbReference type="GO" id="GO:0005634">
    <property type="term" value="C:nucleus"/>
    <property type="evidence" value="ECO:0000250"/>
    <property type="project" value="UniProtKB"/>
</dbReference>
<dbReference type="GO" id="GO:0140592">
    <property type="term" value="F:histone H3R8 methyltransferase activity"/>
    <property type="evidence" value="ECO:0000250"/>
    <property type="project" value="UniProtKB"/>
</dbReference>
<dbReference type="GO" id="GO:0042054">
    <property type="term" value="F:histone methyltransferase activity"/>
    <property type="evidence" value="ECO:0000250"/>
    <property type="project" value="UniProtKB"/>
</dbReference>
<dbReference type="GO" id="GO:0030331">
    <property type="term" value="F:nuclear estrogen receptor binding"/>
    <property type="evidence" value="ECO:0000250"/>
    <property type="project" value="UniProtKB"/>
</dbReference>
<dbReference type="GO" id="GO:0016274">
    <property type="term" value="F:protein-arginine N-methyltransferase activity"/>
    <property type="evidence" value="ECO:0000250"/>
    <property type="project" value="UniProtKB"/>
</dbReference>
<dbReference type="GO" id="GO:0035242">
    <property type="term" value="F:protein-arginine omega-N asymmetric methyltransferase activity"/>
    <property type="evidence" value="ECO:0007669"/>
    <property type="project" value="UniProtKB-EC"/>
</dbReference>
<dbReference type="GO" id="GO:0044877">
    <property type="term" value="F:protein-containing complex binding"/>
    <property type="evidence" value="ECO:0000250"/>
    <property type="project" value="UniProtKB"/>
</dbReference>
<dbReference type="GO" id="GO:0006338">
    <property type="term" value="P:chromatin remodeling"/>
    <property type="evidence" value="ECO:0000318"/>
    <property type="project" value="GO_Central"/>
</dbReference>
<dbReference type="GO" id="GO:0032259">
    <property type="term" value="P:methylation"/>
    <property type="evidence" value="ECO:0007669"/>
    <property type="project" value="UniProtKB-KW"/>
</dbReference>
<dbReference type="GO" id="GO:0043433">
    <property type="term" value="P:negative regulation of DNA-binding transcription factor activity"/>
    <property type="evidence" value="ECO:0000250"/>
    <property type="project" value="UniProtKB"/>
</dbReference>
<dbReference type="GO" id="GO:0045892">
    <property type="term" value="P:negative regulation of DNA-templated transcription"/>
    <property type="evidence" value="ECO:0000250"/>
    <property type="project" value="UniProtKB"/>
</dbReference>
<dbReference type="GO" id="GO:0032088">
    <property type="term" value="P:negative regulation of NF-kappaB transcription factor activity"/>
    <property type="evidence" value="ECO:0000250"/>
    <property type="project" value="UniProtKB"/>
</dbReference>
<dbReference type="GO" id="GO:0043065">
    <property type="term" value="P:positive regulation of apoptotic process"/>
    <property type="evidence" value="ECO:0000250"/>
    <property type="project" value="UniProtKB"/>
</dbReference>
<dbReference type="GO" id="GO:0060765">
    <property type="term" value="P:regulation of androgen receptor signaling pathway"/>
    <property type="evidence" value="ECO:0000250"/>
    <property type="project" value="UniProtKB"/>
</dbReference>
<dbReference type="GO" id="GO:0006355">
    <property type="term" value="P:regulation of DNA-templated transcription"/>
    <property type="evidence" value="ECO:0000318"/>
    <property type="project" value="GO_Central"/>
</dbReference>
<dbReference type="CDD" id="cd02440">
    <property type="entry name" value="AdoMet_MTases"/>
    <property type="match status" value="1"/>
</dbReference>
<dbReference type="FunFam" id="3.40.50.150:FF:000016">
    <property type="entry name" value="Protein arginine N-methyltransferase 6"/>
    <property type="match status" value="1"/>
</dbReference>
<dbReference type="Gene3D" id="2.70.160.11">
    <property type="entry name" value="Hnrnp arginine n-methyltransferase1"/>
    <property type="match status" value="1"/>
</dbReference>
<dbReference type="Gene3D" id="3.40.50.150">
    <property type="entry name" value="Vaccinia Virus protein VP39"/>
    <property type="match status" value="1"/>
</dbReference>
<dbReference type="InterPro" id="IPR025799">
    <property type="entry name" value="Arg_MeTrfase"/>
</dbReference>
<dbReference type="InterPro" id="IPR041698">
    <property type="entry name" value="Methyltransf_25"/>
</dbReference>
<dbReference type="InterPro" id="IPR055135">
    <property type="entry name" value="PRMT_dom"/>
</dbReference>
<dbReference type="InterPro" id="IPR029063">
    <property type="entry name" value="SAM-dependent_MTases_sf"/>
</dbReference>
<dbReference type="PANTHER" id="PTHR11006">
    <property type="entry name" value="PROTEIN ARGININE N-METHYLTRANSFERASE"/>
    <property type="match status" value="1"/>
</dbReference>
<dbReference type="PANTHER" id="PTHR11006:SF73">
    <property type="entry name" value="PROTEIN ARGININE N-METHYLTRANSFERASE 6"/>
    <property type="match status" value="1"/>
</dbReference>
<dbReference type="Pfam" id="PF13649">
    <property type="entry name" value="Methyltransf_25"/>
    <property type="match status" value="1"/>
</dbReference>
<dbReference type="Pfam" id="PF22528">
    <property type="entry name" value="PRMT_C"/>
    <property type="match status" value="1"/>
</dbReference>
<dbReference type="SUPFAM" id="SSF53335">
    <property type="entry name" value="S-adenosyl-L-methionine-dependent methyltransferases"/>
    <property type="match status" value="1"/>
</dbReference>
<dbReference type="PROSITE" id="PS51678">
    <property type="entry name" value="SAM_MT_PRMT"/>
    <property type="match status" value="1"/>
</dbReference>